<organism>
    <name type="scientific">Mus musculus</name>
    <name type="common">Mouse</name>
    <dbReference type="NCBI Taxonomy" id="10090"/>
    <lineage>
        <taxon>Eukaryota</taxon>
        <taxon>Metazoa</taxon>
        <taxon>Chordata</taxon>
        <taxon>Craniata</taxon>
        <taxon>Vertebrata</taxon>
        <taxon>Euteleostomi</taxon>
        <taxon>Mammalia</taxon>
        <taxon>Eutheria</taxon>
        <taxon>Euarchontoglires</taxon>
        <taxon>Glires</taxon>
        <taxon>Rodentia</taxon>
        <taxon>Myomorpha</taxon>
        <taxon>Muroidea</taxon>
        <taxon>Muridae</taxon>
        <taxon>Murinae</taxon>
        <taxon>Mus</taxon>
        <taxon>Mus</taxon>
    </lineage>
</organism>
<sequence>MELARPRSNFQSDLDFCPDCGSVLPLPGIQDTVICSRCGFSIDVRDCEGKVVKTSVVFNKLGATIPLSVDEGPELQGPVIDRRCPRCGHEGMAYHTRQMRSADEGQTVFYTCINCKFQEKEDS</sequence>
<accession>Q791N7</accession>
<comment type="function">
    <text evidence="1">Core component of RNA polymerase I (Pol I), a DNA-dependent RNA polymerase which synthesizes ribosomal RNA precursors using the four ribonucleoside triphosphates as substrates. Can mediate Pol I proofreading of the nascent RNA transcript. Anchors into the Pol I active site to monitor transcription fidelity and cleave mis-incorporated 5'-ribonucleotides.</text>
</comment>
<comment type="subunit">
    <text evidence="1">Component of the RNA polymerase I (Pol I) complex consisting of 13 subunits: a ten-subunit catalytic core composed of POLR1A/RPA1, POLR1B/RPA2, POLR1C/RPAC1, POLR1D/RPAC2, POLR1H/RPA12, POLR2E/RPABC1, POLR2F/RPABC2, POLR2H/RPABC3, POLR2K/RPABC4 and POLR2L/RPABC5; a mobile stalk subunit POLR1F/RPA43 protruding from the core and additional subunits homologous to general transcription factors POLR1E/RPA49 and POLR1G/RPA34. Part of Pol I pre-initiation complex (PIC), in which Pol I core assembles with RRN3 and promoter-bound UTBF and SL1/TIF-IB complex.</text>
</comment>
<comment type="subcellular location">
    <subcellularLocation>
        <location evidence="1">Nucleus</location>
        <location evidence="1">Nucleolus</location>
    </subcellularLocation>
</comment>
<comment type="domain">
    <text evidence="1 2">The TFIIS-type zinc-binding beta-ribbon domain contains an acidic hairpin motif (residues Asp-103, Glu-104) that likely coordinates the nucleophilic water and magnesium to cleave the scissile phosphodiester bond and release the mis-incorporated 5'-ribonucleotides.</text>
</comment>
<comment type="similarity">
    <text evidence="6">Belongs to the archaeal RpoM/eukaryotic RPA12/RPB9/RPC11 RNA polymerase family.</text>
</comment>
<dbReference type="EMBL" id="AF230339">
    <property type="protein sequence ID" value="AAG50161.1"/>
    <property type="molecule type" value="mRNA"/>
</dbReference>
<dbReference type="EMBL" id="AF230340">
    <property type="protein sequence ID" value="AAG50162.1"/>
    <property type="molecule type" value="Genomic_DNA"/>
</dbReference>
<dbReference type="EMBL" id="AK003714">
    <property type="protein sequence ID" value="BAB22954.1"/>
    <property type="molecule type" value="mRNA"/>
</dbReference>
<dbReference type="EMBL" id="BC043016">
    <property type="protein sequence ID" value="AAH43016.1"/>
    <property type="molecule type" value="mRNA"/>
</dbReference>
<dbReference type="EMBL" id="AK005976">
    <property type="protein sequence ID" value="BAB24350.1"/>
    <property type="molecule type" value="mRNA"/>
</dbReference>
<dbReference type="CCDS" id="CCDS28730.1"/>
<dbReference type="RefSeq" id="NP_001342351.1">
    <property type="nucleotide sequence ID" value="NM_001355422.1"/>
</dbReference>
<dbReference type="RefSeq" id="NP_075651.1">
    <property type="nucleotide sequence ID" value="NM_023162.4"/>
</dbReference>
<dbReference type="RefSeq" id="XP_006524855.1">
    <property type="nucleotide sequence ID" value="XM_006524792.1"/>
</dbReference>
<dbReference type="SMR" id="Q791N7"/>
<dbReference type="BioGRID" id="211240">
    <property type="interactions" value="2"/>
</dbReference>
<dbReference type="FunCoup" id="Q791N7">
    <property type="interactions" value="2167"/>
</dbReference>
<dbReference type="STRING" id="10090.ENSMUSP00000109299"/>
<dbReference type="PaxDb" id="10090-ENSMUSP00000109299"/>
<dbReference type="PeptideAtlas" id="Q791N7"/>
<dbReference type="ProteomicsDB" id="300511"/>
<dbReference type="Pumba" id="Q791N7"/>
<dbReference type="Antibodypedia" id="26188">
    <property type="antibodies" value="157 antibodies from 21 providers"/>
</dbReference>
<dbReference type="DNASU" id="66136"/>
<dbReference type="Ensembl" id="ENSMUST00000113669.9">
    <property type="protein sequence ID" value="ENSMUSP00000109299.3"/>
    <property type="gene ID" value="ENSMUSG00000036315.14"/>
</dbReference>
<dbReference type="Ensembl" id="ENSMUST00000172518.8">
    <property type="protein sequence ID" value="ENSMUSP00000133651.2"/>
    <property type="gene ID" value="ENSMUSG00000036315.14"/>
</dbReference>
<dbReference type="GeneID" id="66136"/>
<dbReference type="KEGG" id="mmu:66136"/>
<dbReference type="UCSC" id="uc008clo.1">
    <property type="organism name" value="mouse"/>
</dbReference>
<dbReference type="AGR" id="MGI:1913386"/>
<dbReference type="CTD" id="30834"/>
<dbReference type="MGI" id="MGI:1913386">
    <property type="gene designation" value="Polr1h"/>
</dbReference>
<dbReference type="VEuPathDB" id="HostDB:ENSMUSG00000036315"/>
<dbReference type="eggNOG" id="KOG2907">
    <property type="taxonomic scope" value="Eukaryota"/>
</dbReference>
<dbReference type="GeneTree" id="ENSGT00390000008126"/>
<dbReference type="HOGENOM" id="CLU_093932_1_2_1"/>
<dbReference type="InParanoid" id="Q791N7"/>
<dbReference type="OMA" id="EMQYHTL"/>
<dbReference type="OrthoDB" id="10056816at2759"/>
<dbReference type="PhylomeDB" id="Q791N7"/>
<dbReference type="TreeFam" id="TF313881"/>
<dbReference type="Reactome" id="R-MMU-5250924">
    <property type="pathway name" value="B-WICH complex positively regulates rRNA expression"/>
</dbReference>
<dbReference type="Reactome" id="R-MMU-73762">
    <property type="pathway name" value="RNA Polymerase I Transcription Initiation"/>
</dbReference>
<dbReference type="Reactome" id="R-MMU-73772">
    <property type="pathway name" value="RNA Polymerase I Promoter Escape"/>
</dbReference>
<dbReference type="Reactome" id="R-MMU-73863">
    <property type="pathway name" value="RNA Polymerase I Transcription Termination"/>
</dbReference>
<dbReference type="BioGRID-ORCS" id="66136">
    <property type="hits" value="25 hits in 81 CRISPR screens"/>
</dbReference>
<dbReference type="ChiTaRS" id="Znrd1">
    <property type="organism name" value="mouse"/>
</dbReference>
<dbReference type="PRO" id="PR:Q791N7"/>
<dbReference type="Proteomes" id="UP000000589">
    <property type="component" value="Chromosome 17"/>
</dbReference>
<dbReference type="RNAct" id="Q791N7">
    <property type="molecule type" value="protein"/>
</dbReference>
<dbReference type="Bgee" id="ENSMUSG00000036315">
    <property type="expression patterns" value="Expressed in primitive streak and 267 other cell types or tissues"/>
</dbReference>
<dbReference type="ExpressionAtlas" id="Q791N7">
    <property type="expression patterns" value="baseline and differential"/>
</dbReference>
<dbReference type="GO" id="GO:0005654">
    <property type="term" value="C:nucleoplasm"/>
    <property type="evidence" value="ECO:0000304"/>
    <property type="project" value="Reactome"/>
</dbReference>
<dbReference type="GO" id="GO:0005736">
    <property type="term" value="C:RNA polymerase I complex"/>
    <property type="evidence" value="ECO:0007669"/>
    <property type="project" value="Ensembl"/>
</dbReference>
<dbReference type="GO" id="GO:0003899">
    <property type="term" value="F:DNA-directed RNA polymerase activity"/>
    <property type="evidence" value="ECO:0007669"/>
    <property type="project" value="InterPro"/>
</dbReference>
<dbReference type="GO" id="GO:0003676">
    <property type="term" value="F:nucleic acid binding"/>
    <property type="evidence" value="ECO:0007669"/>
    <property type="project" value="InterPro"/>
</dbReference>
<dbReference type="GO" id="GO:0008270">
    <property type="term" value="F:zinc ion binding"/>
    <property type="evidence" value="ECO:0007669"/>
    <property type="project" value="UniProtKB-KW"/>
</dbReference>
<dbReference type="GO" id="GO:0006351">
    <property type="term" value="P:DNA-templated transcription"/>
    <property type="evidence" value="ECO:0007669"/>
    <property type="project" value="InterPro"/>
</dbReference>
<dbReference type="CDD" id="cd10507">
    <property type="entry name" value="Zn-ribbon_RPA12"/>
    <property type="match status" value="1"/>
</dbReference>
<dbReference type="FunFam" id="2.20.25.10:FF:000020">
    <property type="entry name" value="DNA-directed RNA polymerase subunit"/>
    <property type="match status" value="1"/>
</dbReference>
<dbReference type="Gene3D" id="2.20.25.10">
    <property type="match status" value="1"/>
</dbReference>
<dbReference type="InterPro" id="IPR019761">
    <property type="entry name" value="DNA-dir_RNA_pol-M_15_CS"/>
</dbReference>
<dbReference type="InterPro" id="IPR012164">
    <property type="entry name" value="Rpa12/Rpb9/Rpc10/TFS"/>
</dbReference>
<dbReference type="InterPro" id="IPR034004">
    <property type="entry name" value="Zn_ribbon_RPA12_C"/>
</dbReference>
<dbReference type="InterPro" id="IPR001222">
    <property type="entry name" value="Znf_TFIIS"/>
</dbReference>
<dbReference type="PANTHER" id="PTHR11239">
    <property type="entry name" value="DNA-DIRECTED RNA POLYMERASE"/>
    <property type="match status" value="1"/>
</dbReference>
<dbReference type="PANTHER" id="PTHR11239:SF14">
    <property type="entry name" value="DNA-DIRECTED RNA POLYMERASE I SUBUNIT RPA12"/>
    <property type="match status" value="1"/>
</dbReference>
<dbReference type="Pfam" id="PF01096">
    <property type="entry name" value="Zn_ribbon_TFIIS"/>
    <property type="match status" value="1"/>
</dbReference>
<dbReference type="PIRSF" id="PIRSF005586">
    <property type="entry name" value="RNApol_RpoM"/>
    <property type="match status" value="1"/>
</dbReference>
<dbReference type="SMART" id="SM00440">
    <property type="entry name" value="ZnF_C2C2"/>
    <property type="match status" value="1"/>
</dbReference>
<dbReference type="SUPFAM" id="SSF57783">
    <property type="entry name" value="Zinc beta-ribbon"/>
    <property type="match status" value="1"/>
</dbReference>
<dbReference type="PROSITE" id="PS01030">
    <property type="entry name" value="RNA_POL_M_15KD"/>
    <property type="match status" value="1"/>
</dbReference>
<dbReference type="PROSITE" id="PS00466">
    <property type="entry name" value="ZF_TFIIS_1"/>
    <property type="match status" value="1"/>
</dbReference>
<dbReference type="PROSITE" id="PS51133">
    <property type="entry name" value="ZF_TFIIS_2"/>
    <property type="match status" value="1"/>
</dbReference>
<feature type="chain" id="PRO_0000121462" description="DNA-directed RNA polymerase I subunit RPA12">
    <location>
        <begin position="1"/>
        <end position="123"/>
    </location>
</feature>
<feature type="zinc finger region" description="C4-type" evidence="1">
    <location>
        <begin position="17"/>
        <end position="38"/>
    </location>
</feature>
<feature type="zinc finger region" description="TFIIS-type" evidence="3">
    <location>
        <begin position="80"/>
        <end position="120"/>
    </location>
</feature>
<feature type="short sequence motif" description="Hairpin" evidence="1 2">
    <location>
        <begin position="103"/>
        <end position="104"/>
    </location>
</feature>
<feature type="binding site" evidence="4">
    <location>
        <position position="17"/>
    </location>
    <ligand>
        <name>Zn(2+)</name>
        <dbReference type="ChEBI" id="CHEBI:29105"/>
        <label>1</label>
    </ligand>
</feature>
<feature type="binding site" evidence="4">
    <location>
        <position position="20"/>
    </location>
    <ligand>
        <name>Zn(2+)</name>
        <dbReference type="ChEBI" id="CHEBI:29105"/>
        <label>1</label>
    </ligand>
</feature>
<feature type="binding site" evidence="4">
    <location>
        <position position="35"/>
    </location>
    <ligand>
        <name>Zn(2+)</name>
        <dbReference type="ChEBI" id="CHEBI:29105"/>
        <label>1</label>
    </ligand>
</feature>
<feature type="binding site" evidence="4">
    <location>
        <position position="38"/>
    </location>
    <ligand>
        <name>Zn(2+)</name>
        <dbReference type="ChEBI" id="CHEBI:29105"/>
        <label>1</label>
    </ligand>
</feature>
<feature type="binding site" evidence="3">
    <location>
        <position position="84"/>
    </location>
    <ligand>
        <name>Zn(2+)</name>
        <dbReference type="ChEBI" id="CHEBI:29105"/>
        <label>2</label>
    </ligand>
</feature>
<feature type="binding site" evidence="3">
    <location>
        <position position="87"/>
    </location>
    <ligand>
        <name>Zn(2+)</name>
        <dbReference type="ChEBI" id="CHEBI:29105"/>
        <label>2</label>
    </ligand>
</feature>
<feature type="binding site" evidence="3">
    <location>
        <position position="112"/>
    </location>
    <ligand>
        <name>Zn(2+)</name>
        <dbReference type="ChEBI" id="CHEBI:29105"/>
        <label>2</label>
    </ligand>
</feature>
<feature type="binding site" evidence="3">
    <location>
        <position position="115"/>
    </location>
    <ligand>
        <name>Zn(2+)</name>
        <dbReference type="ChEBI" id="CHEBI:29105"/>
        <label>2</label>
    </ligand>
</feature>
<name>RPA12_MOUSE</name>
<protein>
    <recommendedName>
        <fullName evidence="7">DNA-directed RNA polymerase I subunit RPA12</fullName>
    </recommendedName>
    <alternativeName>
        <fullName evidence="1">DNA-directed RNA polymerase I subunit H</fullName>
    </alternativeName>
    <alternativeName>
        <fullName evidence="8">Zinc ribbon domain-containing protein 1</fullName>
    </alternativeName>
</protein>
<evidence type="ECO:0000250" key="1">
    <source>
        <dbReference type="UniProtKB" id="Q9P1U0"/>
    </source>
</evidence>
<evidence type="ECO:0000250" key="2">
    <source>
        <dbReference type="UniProtKB" id="Q9Y2Y1"/>
    </source>
</evidence>
<evidence type="ECO:0000255" key="3">
    <source>
        <dbReference type="PROSITE-ProRule" id="PRU00472"/>
    </source>
</evidence>
<evidence type="ECO:0000255" key="4">
    <source>
        <dbReference type="PROSITE-ProRule" id="PRU10145"/>
    </source>
</evidence>
<evidence type="ECO:0000303" key="5">
    <source ref="1"/>
</evidence>
<evidence type="ECO:0000305" key="6"/>
<evidence type="ECO:0000305" key="7">
    <source ref="1"/>
</evidence>
<evidence type="ECO:0000312" key="8">
    <source>
        <dbReference type="MGI" id="MGI:1913386"/>
    </source>
</evidence>
<keyword id="KW-0240">DNA-directed RNA polymerase</keyword>
<keyword id="KW-0479">Metal-binding</keyword>
<keyword id="KW-0539">Nucleus</keyword>
<keyword id="KW-1185">Reference proteome</keyword>
<keyword id="KW-0804">Transcription</keyword>
<keyword id="KW-0862">Zinc</keyword>
<keyword id="KW-0863">Zinc-finger</keyword>
<reference key="1">
    <citation type="submission" date="2000-02" db="EMBL/GenBank/DDBJ databases">
        <title>Complementation studies of Rpa12, small specific subunit of nuclear RNA polymerase I.</title>
        <authorList>
            <person name="Shematorova E.K."/>
            <person name="Lebedenko E.N."/>
            <person name="Shpakovski G.V."/>
        </authorList>
    </citation>
    <scope>NUCLEOTIDE SEQUENCE [GENOMIC DNA / MRNA]</scope>
</reference>
<reference key="2">
    <citation type="journal article" date="2005" name="Science">
        <title>The transcriptional landscape of the mammalian genome.</title>
        <authorList>
            <person name="Carninci P."/>
            <person name="Kasukawa T."/>
            <person name="Katayama S."/>
            <person name="Gough J."/>
            <person name="Frith M.C."/>
            <person name="Maeda N."/>
            <person name="Oyama R."/>
            <person name="Ravasi T."/>
            <person name="Lenhard B."/>
            <person name="Wells C."/>
            <person name="Kodzius R."/>
            <person name="Shimokawa K."/>
            <person name="Bajic V.B."/>
            <person name="Brenner S.E."/>
            <person name="Batalov S."/>
            <person name="Forrest A.R."/>
            <person name="Zavolan M."/>
            <person name="Davis M.J."/>
            <person name="Wilming L.G."/>
            <person name="Aidinis V."/>
            <person name="Allen J.E."/>
            <person name="Ambesi-Impiombato A."/>
            <person name="Apweiler R."/>
            <person name="Aturaliya R.N."/>
            <person name="Bailey T.L."/>
            <person name="Bansal M."/>
            <person name="Baxter L."/>
            <person name="Beisel K.W."/>
            <person name="Bersano T."/>
            <person name="Bono H."/>
            <person name="Chalk A.M."/>
            <person name="Chiu K.P."/>
            <person name="Choudhary V."/>
            <person name="Christoffels A."/>
            <person name="Clutterbuck D.R."/>
            <person name="Crowe M.L."/>
            <person name="Dalla E."/>
            <person name="Dalrymple B.P."/>
            <person name="de Bono B."/>
            <person name="Della Gatta G."/>
            <person name="di Bernardo D."/>
            <person name="Down T."/>
            <person name="Engstrom P."/>
            <person name="Fagiolini M."/>
            <person name="Faulkner G."/>
            <person name="Fletcher C.F."/>
            <person name="Fukushima T."/>
            <person name="Furuno M."/>
            <person name="Futaki S."/>
            <person name="Gariboldi M."/>
            <person name="Georgii-Hemming P."/>
            <person name="Gingeras T.R."/>
            <person name="Gojobori T."/>
            <person name="Green R.E."/>
            <person name="Gustincich S."/>
            <person name="Harbers M."/>
            <person name="Hayashi Y."/>
            <person name="Hensch T.K."/>
            <person name="Hirokawa N."/>
            <person name="Hill D."/>
            <person name="Huminiecki L."/>
            <person name="Iacono M."/>
            <person name="Ikeo K."/>
            <person name="Iwama A."/>
            <person name="Ishikawa T."/>
            <person name="Jakt M."/>
            <person name="Kanapin A."/>
            <person name="Katoh M."/>
            <person name="Kawasawa Y."/>
            <person name="Kelso J."/>
            <person name="Kitamura H."/>
            <person name="Kitano H."/>
            <person name="Kollias G."/>
            <person name="Krishnan S.P."/>
            <person name="Kruger A."/>
            <person name="Kummerfeld S.K."/>
            <person name="Kurochkin I.V."/>
            <person name="Lareau L.F."/>
            <person name="Lazarevic D."/>
            <person name="Lipovich L."/>
            <person name="Liu J."/>
            <person name="Liuni S."/>
            <person name="McWilliam S."/>
            <person name="Madan Babu M."/>
            <person name="Madera M."/>
            <person name="Marchionni L."/>
            <person name="Matsuda H."/>
            <person name="Matsuzawa S."/>
            <person name="Miki H."/>
            <person name="Mignone F."/>
            <person name="Miyake S."/>
            <person name="Morris K."/>
            <person name="Mottagui-Tabar S."/>
            <person name="Mulder N."/>
            <person name="Nakano N."/>
            <person name="Nakauchi H."/>
            <person name="Ng P."/>
            <person name="Nilsson R."/>
            <person name="Nishiguchi S."/>
            <person name="Nishikawa S."/>
            <person name="Nori F."/>
            <person name="Ohara O."/>
            <person name="Okazaki Y."/>
            <person name="Orlando V."/>
            <person name="Pang K.C."/>
            <person name="Pavan W.J."/>
            <person name="Pavesi G."/>
            <person name="Pesole G."/>
            <person name="Petrovsky N."/>
            <person name="Piazza S."/>
            <person name="Reed J."/>
            <person name="Reid J.F."/>
            <person name="Ring B.Z."/>
            <person name="Ringwald M."/>
            <person name="Rost B."/>
            <person name="Ruan Y."/>
            <person name="Salzberg S.L."/>
            <person name="Sandelin A."/>
            <person name="Schneider C."/>
            <person name="Schoenbach C."/>
            <person name="Sekiguchi K."/>
            <person name="Semple C.A."/>
            <person name="Seno S."/>
            <person name="Sessa L."/>
            <person name="Sheng Y."/>
            <person name="Shibata Y."/>
            <person name="Shimada H."/>
            <person name="Shimada K."/>
            <person name="Silva D."/>
            <person name="Sinclair B."/>
            <person name="Sperling S."/>
            <person name="Stupka E."/>
            <person name="Sugiura K."/>
            <person name="Sultana R."/>
            <person name="Takenaka Y."/>
            <person name="Taki K."/>
            <person name="Tammoja K."/>
            <person name="Tan S.L."/>
            <person name="Tang S."/>
            <person name="Taylor M.S."/>
            <person name="Tegner J."/>
            <person name="Teichmann S.A."/>
            <person name="Ueda H.R."/>
            <person name="van Nimwegen E."/>
            <person name="Verardo R."/>
            <person name="Wei C.L."/>
            <person name="Yagi K."/>
            <person name="Yamanishi H."/>
            <person name="Zabarovsky E."/>
            <person name="Zhu S."/>
            <person name="Zimmer A."/>
            <person name="Hide W."/>
            <person name="Bult C."/>
            <person name="Grimmond S.M."/>
            <person name="Teasdale R.D."/>
            <person name="Liu E.T."/>
            <person name="Brusic V."/>
            <person name="Quackenbush J."/>
            <person name="Wahlestedt C."/>
            <person name="Mattick J.S."/>
            <person name="Hume D.A."/>
            <person name="Kai C."/>
            <person name="Sasaki D."/>
            <person name="Tomaru Y."/>
            <person name="Fukuda S."/>
            <person name="Kanamori-Katayama M."/>
            <person name="Suzuki M."/>
            <person name="Aoki J."/>
            <person name="Arakawa T."/>
            <person name="Iida J."/>
            <person name="Imamura K."/>
            <person name="Itoh M."/>
            <person name="Kato T."/>
            <person name="Kawaji H."/>
            <person name="Kawagashira N."/>
            <person name="Kawashima T."/>
            <person name="Kojima M."/>
            <person name="Kondo S."/>
            <person name="Konno H."/>
            <person name="Nakano K."/>
            <person name="Ninomiya N."/>
            <person name="Nishio T."/>
            <person name="Okada M."/>
            <person name="Plessy C."/>
            <person name="Shibata K."/>
            <person name="Shiraki T."/>
            <person name="Suzuki S."/>
            <person name="Tagami M."/>
            <person name="Waki K."/>
            <person name="Watahiki A."/>
            <person name="Okamura-Oho Y."/>
            <person name="Suzuki H."/>
            <person name="Kawai J."/>
            <person name="Hayashizaki Y."/>
        </authorList>
    </citation>
    <scope>NUCLEOTIDE SEQUENCE [LARGE SCALE MRNA]</scope>
    <source>
        <strain>C57BL/6J</strain>
        <tissue>Testis</tissue>
    </source>
</reference>
<reference key="3">
    <citation type="journal article" date="2004" name="Genome Res.">
        <title>The status, quality, and expansion of the NIH full-length cDNA project: the Mammalian Gene Collection (MGC).</title>
        <authorList>
            <consortium name="The MGC Project Team"/>
        </authorList>
    </citation>
    <scope>NUCLEOTIDE SEQUENCE [LARGE SCALE MRNA]</scope>
    <source>
        <strain>C57BL/6J</strain>
        <tissue>Brain</tissue>
    </source>
</reference>
<reference key="4">
    <citation type="journal article" date="2010" name="Cell">
        <title>A tissue-specific atlas of mouse protein phosphorylation and expression.</title>
        <authorList>
            <person name="Huttlin E.L."/>
            <person name="Jedrychowski M.P."/>
            <person name="Elias J.E."/>
            <person name="Goswami T."/>
            <person name="Rad R."/>
            <person name="Beausoleil S.A."/>
            <person name="Villen J."/>
            <person name="Haas W."/>
            <person name="Sowa M.E."/>
            <person name="Gygi S.P."/>
        </authorList>
    </citation>
    <scope>IDENTIFICATION BY MASS SPECTROMETRY [LARGE SCALE ANALYSIS]</scope>
    <source>
        <tissue>Testis</tissue>
    </source>
</reference>
<proteinExistence type="evidence at protein level"/>
<gene>
    <name evidence="1" type="primary">Polr1h</name>
    <name evidence="5" type="synonym">Rpa12</name>
    <name evidence="8" type="synonym">Znrd1</name>
</gene>